<reference key="1">
    <citation type="submission" date="2009-02" db="EMBL/GenBank/DDBJ databases">
        <title>Genome sequence of Bacillus cereus 03BB102.</title>
        <authorList>
            <person name="Dodson R.J."/>
            <person name="Jackson P."/>
            <person name="Munk A.C."/>
            <person name="Brettin T."/>
            <person name="Bruce D."/>
            <person name="Detter C."/>
            <person name="Tapia R."/>
            <person name="Han C."/>
            <person name="Sutton G."/>
            <person name="Sims D."/>
        </authorList>
    </citation>
    <scope>NUCLEOTIDE SEQUENCE [LARGE SCALE GENOMIC DNA]</scope>
    <source>
        <strain>03BB102</strain>
    </source>
</reference>
<keyword id="KW-0012">Acyltransferase</keyword>
<keyword id="KW-0028">Amino-acid biosynthesis</keyword>
<keyword id="KW-0963">Cytoplasm</keyword>
<keyword id="KW-0486">Methionine biosynthesis</keyword>
<keyword id="KW-0808">Transferase</keyword>
<evidence type="ECO:0000255" key="1">
    <source>
        <dbReference type="HAMAP-Rule" id="MF_00295"/>
    </source>
</evidence>
<dbReference type="EC" id="2.3.1.31" evidence="1"/>
<dbReference type="EMBL" id="CP001407">
    <property type="protein sequence ID" value="ACO30217.1"/>
    <property type="molecule type" value="Genomic_DNA"/>
</dbReference>
<dbReference type="SMR" id="C1EQ75"/>
<dbReference type="KEGG" id="bcx:BCA_5557"/>
<dbReference type="PATRIC" id="fig|572264.18.peg.5479"/>
<dbReference type="UniPathway" id="UPA00051">
    <property type="reaction ID" value="UER00074"/>
</dbReference>
<dbReference type="Proteomes" id="UP000002210">
    <property type="component" value="Chromosome"/>
</dbReference>
<dbReference type="GO" id="GO:0005737">
    <property type="term" value="C:cytoplasm"/>
    <property type="evidence" value="ECO:0007669"/>
    <property type="project" value="UniProtKB-SubCell"/>
</dbReference>
<dbReference type="GO" id="GO:0004414">
    <property type="term" value="F:homoserine O-acetyltransferase activity"/>
    <property type="evidence" value="ECO:0007669"/>
    <property type="project" value="UniProtKB-EC"/>
</dbReference>
<dbReference type="GO" id="GO:0008899">
    <property type="term" value="F:homoserine O-succinyltransferase activity"/>
    <property type="evidence" value="ECO:0007669"/>
    <property type="project" value="UniProtKB-UniRule"/>
</dbReference>
<dbReference type="GO" id="GO:0019281">
    <property type="term" value="P:L-methionine biosynthetic process from homoserine via O-succinyl-L-homoserine and cystathionine"/>
    <property type="evidence" value="ECO:0007669"/>
    <property type="project" value="InterPro"/>
</dbReference>
<dbReference type="CDD" id="cd03131">
    <property type="entry name" value="GATase1_HTS"/>
    <property type="match status" value="1"/>
</dbReference>
<dbReference type="FunFam" id="3.40.50.880:FF:000004">
    <property type="entry name" value="Homoserine O-succinyltransferase"/>
    <property type="match status" value="1"/>
</dbReference>
<dbReference type="Gene3D" id="3.40.50.880">
    <property type="match status" value="1"/>
</dbReference>
<dbReference type="HAMAP" id="MF_00295">
    <property type="entry name" value="MetA_acyltransf"/>
    <property type="match status" value="1"/>
</dbReference>
<dbReference type="InterPro" id="IPR029062">
    <property type="entry name" value="Class_I_gatase-like"/>
</dbReference>
<dbReference type="InterPro" id="IPR005697">
    <property type="entry name" value="HST_MetA"/>
</dbReference>
<dbReference type="InterPro" id="IPR033752">
    <property type="entry name" value="MetA_family"/>
</dbReference>
<dbReference type="NCBIfam" id="TIGR01001">
    <property type="entry name" value="metA"/>
    <property type="match status" value="1"/>
</dbReference>
<dbReference type="PANTHER" id="PTHR20919">
    <property type="entry name" value="HOMOSERINE O-SUCCINYLTRANSFERASE"/>
    <property type="match status" value="1"/>
</dbReference>
<dbReference type="PANTHER" id="PTHR20919:SF0">
    <property type="entry name" value="HOMOSERINE O-SUCCINYLTRANSFERASE"/>
    <property type="match status" value="1"/>
</dbReference>
<dbReference type="Pfam" id="PF04204">
    <property type="entry name" value="HTS"/>
    <property type="match status" value="1"/>
</dbReference>
<dbReference type="PIRSF" id="PIRSF000450">
    <property type="entry name" value="H_ser_succinyltr"/>
    <property type="match status" value="1"/>
</dbReference>
<dbReference type="SUPFAM" id="SSF52317">
    <property type="entry name" value="Class I glutamine amidotransferase-like"/>
    <property type="match status" value="1"/>
</dbReference>
<sequence length="301" mass="35245">MPIIIDKDLPARKVLQEENIFVMTKERAETQDIRALKIAILNLMPTKQETEAQLLRLIGNTPLQLDVHLLHMESHLSRNVAQEHLTSFYKTFRDIENEKFDGLIITGAPVETLSFEEVDYWEELKRIMEYSKTNVTSTLHICWGAQAGLYHHYGVPKYPLKEKMFGVFEHEVREQHVKLLQGFDELFFAPHSRHTEVRENDIRGVKELTLLANSEEAGVHLVIGPEGRQVFALGHSEYSCDTLKQEYERDRQKGLNIDVPKNYFKHNNPNEKPLVRWRSHGNLLFSNWLNYYVYQETPYVL</sequence>
<name>METAA_BACC3</name>
<accession>C1EQ75</accession>
<gene>
    <name evidence="1" type="primary">metAA</name>
    <name type="ordered locus">BCA_5557</name>
</gene>
<organism>
    <name type="scientific">Bacillus cereus (strain 03BB102)</name>
    <dbReference type="NCBI Taxonomy" id="572264"/>
    <lineage>
        <taxon>Bacteria</taxon>
        <taxon>Bacillati</taxon>
        <taxon>Bacillota</taxon>
        <taxon>Bacilli</taxon>
        <taxon>Bacillales</taxon>
        <taxon>Bacillaceae</taxon>
        <taxon>Bacillus</taxon>
        <taxon>Bacillus cereus group</taxon>
    </lineage>
</organism>
<proteinExistence type="inferred from homology"/>
<protein>
    <recommendedName>
        <fullName evidence="1">Homoserine O-acetyltransferase</fullName>
        <shortName evidence="1">HAT</shortName>
        <ecNumber evidence="1">2.3.1.31</ecNumber>
    </recommendedName>
    <alternativeName>
        <fullName evidence="1">Homoserine transacetylase</fullName>
        <shortName evidence="1">HTA</shortName>
    </alternativeName>
</protein>
<feature type="chain" id="PRO_1000132699" description="Homoserine O-acetyltransferase">
    <location>
        <begin position="1"/>
        <end position="301"/>
    </location>
</feature>
<feature type="active site" description="Acyl-thioester intermediate" evidence="1">
    <location>
        <position position="142"/>
    </location>
</feature>
<feature type="active site" description="Proton acceptor" evidence="1">
    <location>
        <position position="235"/>
    </location>
</feature>
<feature type="active site" evidence="1">
    <location>
        <position position="237"/>
    </location>
</feature>
<feature type="binding site" evidence="1">
    <location>
        <position position="163"/>
    </location>
    <ligand>
        <name>substrate</name>
    </ligand>
</feature>
<feature type="binding site" evidence="1">
    <location>
        <position position="192"/>
    </location>
    <ligand>
        <name>substrate</name>
    </ligand>
</feature>
<feature type="binding site" evidence="1">
    <location>
        <position position="249"/>
    </location>
    <ligand>
        <name>substrate</name>
    </ligand>
</feature>
<feature type="site" description="Important for acyl-CoA specificity" evidence="1">
    <location>
        <position position="111"/>
    </location>
</feature>
<feature type="site" description="Important for substrate specificity" evidence="1">
    <location>
        <position position="192"/>
    </location>
</feature>
<comment type="function">
    <text evidence="1">Transfers an acetyl group from acetyl-CoA to L-homoserine, forming acetyl-L-homoserine.</text>
</comment>
<comment type="catalytic activity">
    <reaction evidence="1">
        <text>L-homoserine + acetyl-CoA = O-acetyl-L-homoserine + CoA</text>
        <dbReference type="Rhea" id="RHEA:13701"/>
        <dbReference type="ChEBI" id="CHEBI:57287"/>
        <dbReference type="ChEBI" id="CHEBI:57288"/>
        <dbReference type="ChEBI" id="CHEBI:57476"/>
        <dbReference type="ChEBI" id="CHEBI:57716"/>
        <dbReference type="EC" id="2.3.1.31"/>
    </reaction>
</comment>
<comment type="pathway">
    <text evidence="1">Amino-acid biosynthesis; L-methionine biosynthesis via de novo pathway; O-acetyl-L-homoserine from L-homoserine: step 1/1.</text>
</comment>
<comment type="subcellular location">
    <subcellularLocation>
        <location evidence="1">Cytoplasm</location>
    </subcellularLocation>
</comment>
<comment type="similarity">
    <text evidence="1">Belongs to the MetA family.</text>
</comment>